<comment type="function">
    <text evidence="1">Catalyzes the transfer of endogenously produced octanoic acid from octanoyl-acyl-carrier-protein onto the lipoyl domains of lipoate-dependent enzymes. Lipoyl-ACP can also act as a substrate although octanoyl-ACP is likely to be the physiological substrate (By similarity).</text>
</comment>
<comment type="catalytic activity">
    <reaction>
        <text>octanoyl-[ACP] + L-lysyl-[protein] = N(6)-octanoyl-L-lysyl-[protein] + holo-[ACP] + H(+)</text>
        <dbReference type="Rhea" id="RHEA:17665"/>
        <dbReference type="Rhea" id="RHEA-COMP:9636"/>
        <dbReference type="Rhea" id="RHEA-COMP:9685"/>
        <dbReference type="Rhea" id="RHEA-COMP:9752"/>
        <dbReference type="Rhea" id="RHEA-COMP:9928"/>
        <dbReference type="ChEBI" id="CHEBI:15378"/>
        <dbReference type="ChEBI" id="CHEBI:29969"/>
        <dbReference type="ChEBI" id="CHEBI:64479"/>
        <dbReference type="ChEBI" id="CHEBI:78463"/>
        <dbReference type="ChEBI" id="CHEBI:78809"/>
        <dbReference type="EC" id="2.3.1.181"/>
    </reaction>
</comment>
<comment type="pathway">
    <text>Protein modification; protein lipoylation via endogenous pathway; protein N(6)-(lipoyl)lysine from octanoyl-[acyl-carrier-protein]: step 1/2.</text>
</comment>
<comment type="subcellular location">
    <subcellularLocation>
        <location evidence="4">Mitochondrion</location>
    </subcellularLocation>
</comment>
<comment type="miscellaneous">
    <text evidence="1">In the reaction, the free carboxyl group of octanoic acid is attached via an amide linkage to the epsilon-amino group of a specific lysine residue of lipoyl domains of lipoate-dependent enzymes.</text>
</comment>
<comment type="similarity">
    <text evidence="4">Belongs to the LipB family.</text>
</comment>
<name>LIPB_KLULA</name>
<feature type="transit peptide" description="Mitochondrion" evidence="2">
    <location>
        <begin position="1"/>
        <end status="unknown"/>
    </location>
</feature>
<feature type="chain" id="PRO_0000017858" description="Octanoyltransferase, mitochondrial">
    <location>
        <begin status="unknown"/>
        <end position="332"/>
    </location>
</feature>
<feature type="domain" description="BPL/LPL catalytic" evidence="3">
    <location>
        <begin position="115"/>
        <end position="318"/>
    </location>
</feature>
<feature type="active site" description="Acyl-thioester intermediate" evidence="1">
    <location>
        <position position="278"/>
    </location>
</feature>
<feature type="binding site" evidence="1">
    <location>
        <begin position="169"/>
        <end position="176"/>
    </location>
    <ligand>
        <name>substrate</name>
    </ligand>
</feature>
<feature type="binding site" evidence="1">
    <location>
        <begin position="247"/>
        <end position="249"/>
    </location>
    <ligand>
        <name>substrate</name>
    </ligand>
</feature>
<feature type="site" description="Lowers pKa of active site Cys" evidence="1">
    <location>
        <position position="244"/>
    </location>
</feature>
<keyword id="KW-0012">Acyltransferase</keyword>
<keyword id="KW-0496">Mitochondrion</keyword>
<keyword id="KW-1185">Reference proteome</keyword>
<keyword id="KW-0808">Transferase</keyword>
<keyword id="KW-0809">Transit peptide</keyword>
<reference key="1">
    <citation type="journal article" date="1997" name="Mol. Gen. Genet.">
        <title>Cloning and characterization of the lipoyl-protein ligase gene LIPB from the yeast Kluyveromyces lactis: synergistic respiratory deficiency due to mutations in LIPB and mitochondrial F1-ATPase subunits.</title>
        <authorList>
            <person name="Chen X.J."/>
        </authorList>
    </citation>
    <scope>NUCLEOTIDE SEQUENCE [GENOMIC DNA]</scope>
    <source>
        <strain>ATCC 76492 / CBS 2359/152 / CLIB 210</strain>
    </source>
</reference>
<reference key="2">
    <citation type="journal article" date="2004" name="Nature">
        <title>Genome evolution in yeasts.</title>
        <authorList>
            <person name="Dujon B."/>
            <person name="Sherman D."/>
            <person name="Fischer G."/>
            <person name="Durrens P."/>
            <person name="Casaregola S."/>
            <person name="Lafontaine I."/>
            <person name="de Montigny J."/>
            <person name="Marck C."/>
            <person name="Neuveglise C."/>
            <person name="Talla E."/>
            <person name="Goffard N."/>
            <person name="Frangeul L."/>
            <person name="Aigle M."/>
            <person name="Anthouard V."/>
            <person name="Babour A."/>
            <person name="Barbe V."/>
            <person name="Barnay S."/>
            <person name="Blanchin S."/>
            <person name="Beckerich J.-M."/>
            <person name="Beyne E."/>
            <person name="Bleykasten C."/>
            <person name="Boisrame A."/>
            <person name="Boyer J."/>
            <person name="Cattolico L."/>
            <person name="Confanioleri F."/>
            <person name="de Daruvar A."/>
            <person name="Despons L."/>
            <person name="Fabre E."/>
            <person name="Fairhead C."/>
            <person name="Ferry-Dumazet H."/>
            <person name="Groppi A."/>
            <person name="Hantraye F."/>
            <person name="Hennequin C."/>
            <person name="Jauniaux N."/>
            <person name="Joyet P."/>
            <person name="Kachouri R."/>
            <person name="Kerrest A."/>
            <person name="Koszul R."/>
            <person name="Lemaire M."/>
            <person name="Lesur I."/>
            <person name="Ma L."/>
            <person name="Muller H."/>
            <person name="Nicaud J.-M."/>
            <person name="Nikolski M."/>
            <person name="Oztas S."/>
            <person name="Ozier-Kalogeropoulos O."/>
            <person name="Pellenz S."/>
            <person name="Potier S."/>
            <person name="Richard G.-F."/>
            <person name="Straub M.-L."/>
            <person name="Suleau A."/>
            <person name="Swennen D."/>
            <person name="Tekaia F."/>
            <person name="Wesolowski-Louvel M."/>
            <person name="Westhof E."/>
            <person name="Wirth B."/>
            <person name="Zeniou-Meyer M."/>
            <person name="Zivanovic Y."/>
            <person name="Bolotin-Fukuhara M."/>
            <person name="Thierry A."/>
            <person name="Bouchier C."/>
            <person name="Caudron B."/>
            <person name="Scarpelli C."/>
            <person name="Gaillardin C."/>
            <person name="Weissenbach J."/>
            <person name="Wincker P."/>
            <person name="Souciet J.-L."/>
        </authorList>
    </citation>
    <scope>NUCLEOTIDE SEQUENCE [LARGE SCALE GENOMIC DNA]</scope>
    <source>
        <strain>ATCC 8585 / CBS 2359 / DSM 70799 / NBRC 1267 / NRRL Y-1140 / WM37</strain>
    </source>
</reference>
<evidence type="ECO:0000250" key="1"/>
<evidence type="ECO:0000255" key="2"/>
<evidence type="ECO:0000255" key="3">
    <source>
        <dbReference type="PROSITE-ProRule" id="PRU01067"/>
    </source>
</evidence>
<evidence type="ECO:0000305" key="4"/>
<gene>
    <name type="primary">LIPB</name>
    <name type="ordered locus">KLLA0D18777g</name>
</gene>
<proteinExistence type="inferred from homology"/>
<dbReference type="EC" id="2.3.1.181"/>
<dbReference type="EMBL" id="X87623">
    <property type="protein sequence ID" value="CAA60954.1"/>
    <property type="molecule type" value="Genomic_DNA"/>
</dbReference>
<dbReference type="EMBL" id="CR382124">
    <property type="protein sequence ID" value="CAH00989.1"/>
    <property type="molecule type" value="Genomic_DNA"/>
</dbReference>
<dbReference type="RefSeq" id="XP_453893.1">
    <property type="nucleotide sequence ID" value="XM_453893.1"/>
</dbReference>
<dbReference type="SMR" id="O13476"/>
<dbReference type="FunCoup" id="O13476">
    <property type="interactions" value="437"/>
</dbReference>
<dbReference type="STRING" id="284590.O13476"/>
<dbReference type="PaxDb" id="284590-O13476"/>
<dbReference type="KEGG" id="kla:KLLA0_D18777g"/>
<dbReference type="eggNOG" id="KOG0325">
    <property type="taxonomic scope" value="Eukaryota"/>
</dbReference>
<dbReference type="HOGENOM" id="CLU_035168_0_1_1"/>
<dbReference type="InParanoid" id="O13476"/>
<dbReference type="OMA" id="FEMCGLP"/>
<dbReference type="UniPathway" id="UPA00538">
    <property type="reaction ID" value="UER00592"/>
</dbReference>
<dbReference type="Proteomes" id="UP000000598">
    <property type="component" value="Chromosome D"/>
</dbReference>
<dbReference type="GO" id="GO:0005739">
    <property type="term" value="C:mitochondrion"/>
    <property type="evidence" value="ECO:0007669"/>
    <property type="project" value="UniProtKB-SubCell"/>
</dbReference>
<dbReference type="GO" id="GO:0033819">
    <property type="term" value="F:lipoyl(octanoyl) transferase activity"/>
    <property type="evidence" value="ECO:0007669"/>
    <property type="project" value="UniProtKB-EC"/>
</dbReference>
<dbReference type="GO" id="GO:0036211">
    <property type="term" value="P:protein modification process"/>
    <property type="evidence" value="ECO:0007669"/>
    <property type="project" value="InterPro"/>
</dbReference>
<dbReference type="CDD" id="cd16444">
    <property type="entry name" value="LipB"/>
    <property type="match status" value="1"/>
</dbReference>
<dbReference type="Gene3D" id="3.30.930.10">
    <property type="entry name" value="Bira Bifunctional Protein, Domain 2"/>
    <property type="match status" value="1"/>
</dbReference>
<dbReference type="InterPro" id="IPR045864">
    <property type="entry name" value="aa-tRNA-synth_II/BPL/LPL"/>
</dbReference>
<dbReference type="InterPro" id="IPR004143">
    <property type="entry name" value="BPL_LPL_catalytic"/>
</dbReference>
<dbReference type="InterPro" id="IPR000544">
    <property type="entry name" value="Octanoyltransferase"/>
</dbReference>
<dbReference type="InterPro" id="IPR020605">
    <property type="entry name" value="Octanoyltransferase_CS"/>
</dbReference>
<dbReference type="NCBIfam" id="TIGR00214">
    <property type="entry name" value="lipB"/>
    <property type="match status" value="1"/>
</dbReference>
<dbReference type="PANTHER" id="PTHR10993:SF7">
    <property type="entry name" value="LIPOYLTRANSFERASE 2, MITOCHONDRIAL-RELATED"/>
    <property type="match status" value="1"/>
</dbReference>
<dbReference type="PANTHER" id="PTHR10993">
    <property type="entry name" value="OCTANOYLTRANSFERASE"/>
    <property type="match status" value="1"/>
</dbReference>
<dbReference type="Pfam" id="PF21948">
    <property type="entry name" value="LplA-B_cat"/>
    <property type="match status" value="1"/>
</dbReference>
<dbReference type="PIRSF" id="PIRSF016262">
    <property type="entry name" value="LPLase"/>
    <property type="match status" value="1"/>
</dbReference>
<dbReference type="SUPFAM" id="SSF55681">
    <property type="entry name" value="Class II aaRS and biotin synthetases"/>
    <property type="match status" value="1"/>
</dbReference>
<dbReference type="PROSITE" id="PS51733">
    <property type="entry name" value="BPL_LPL_CATALYTIC"/>
    <property type="match status" value="1"/>
</dbReference>
<dbReference type="PROSITE" id="PS01313">
    <property type="entry name" value="LIPB"/>
    <property type="match status" value="1"/>
</dbReference>
<organism>
    <name type="scientific">Kluyveromyces lactis (strain ATCC 8585 / CBS 2359 / DSM 70799 / NBRC 1267 / NRRL Y-1140 / WM37)</name>
    <name type="common">Yeast</name>
    <name type="synonym">Candida sphaerica</name>
    <dbReference type="NCBI Taxonomy" id="284590"/>
    <lineage>
        <taxon>Eukaryota</taxon>
        <taxon>Fungi</taxon>
        <taxon>Dikarya</taxon>
        <taxon>Ascomycota</taxon>
        <taxon>Saccharomycotina</taxon>
        <taxon>Saccharomycetes</taxon>
        <taxon>Saccharomycetales</taxon>
        <taxon>Saccharomycetaceae</taxon>
        <taxon>Kluyveromyces</taxon>
    </lineage>
</organism>
<protein>
    <recommendedName>
        <fullName>Octanoyltransferase, mitochondrial</fullName>
        <ecNumber>2.3.1.181</ecNumber>
    </recommendedName>
    <alternativeName>
        <fullName>Lipoate biosynthesis protein</fullName>
    </alternativeName>
    <alternativeName>
        <fullName>Lipoate-protein ligase</fullName>
    </alternativeName>
    <alternativeName>
        <fullName>Lipoyl ligase</fullName>
    </alternativeName>
    <alternativeName>
        <fullName>Lipoyl/octanoyl transferase</fullName>
    </alternativeName>
    <alternativeName>
        <fullName>Octanoyl-[acyl-carrier-protein]-protein N-octanoyltransferase</fullName>
    </alternativeName>
</protein>
<accession>O13476</accession>
<sequence>MSKLMLIGTNYWYPSKFGCTIFRKVRFQSTLKCTSTARTQPIDPSAKTIRHLQFVKEIPFETGIDIQEKFVRAHLDIKQLQSKIKREMTNLQKEHNAEIQLNFHEQMILDNINQMKPNPIVLTFQFEPTYTGGKRVKKQITDEQIARYEGFIPSKQKYNKKPKFVQAERGGQVTFHGPGQIVAYIILDLKTFQNLPAKCLVSTIDNAAMNALKVVPKFQGSDEPLNLITQKTNDTGVWVSNQEKIASIGIHVRRSVTSHGICINVDPDLSYMNSFTMCGLSEKKATSIREQVPDSSTSVNDVAVAFVNQLAKLLGITTVERIQLDDLPIYTD</sequence>